<proteinExistence type="inferred from homology"/>
<organism>
    <name type="scientific">Enterobacter sp. (strain 638)</name>
    <dbReference type="NCBI Taxonomy" id="399742"/>
    <lineage>
        <taxon>Bacteria</taxon>
        <taxon>Pseudomonadati</taxon>
        <taxon>Pseudomonadota</taxon>
        <taxon>Gammaproteobacteria</taxon>
        <taxon>Enterobacterales</taxon>
        <taxon>Enterobacteriaceae</taxon>
        <taxon>Enterobacter</taxon>
    </lineage>
</organism>
<comment type="function">
    <text evidence="1">Plays a role in cell envelope biogenesis, maintenance of cell envelope integrity and membrane homeostasis.</text>
</comment>
<comment type="subcellular location">
    <subcellularLocation>
        <location evidence="1">Cell inner membrane</location>
        <topology evidence="1">Multi-pass membrane protein</topology>
    </subcellularLocation>
</comment>
<comment type="similarity">
    <text evidence="1">Belongs to the YciB family.</text>
</comment>
<sequence>MKQFLDFLPLVVFFAFYKLYDIYAATTALIVATAIVLIYTWIRYRKVEKMALITFVLVAVFGGLTVFFHNDEFIKWKVTVIYGLFAGALLFSQWVMNKPLIQRMLGKEITLPQEVWSRLNIAWAVFFILCGLANIYIAFWMPQNIWVNFKVFGLTALTLIFTLLSGVYIYKHMPQDDKH</sequence>
<feature type="chain" id="PRO_1000058473" description="Inner membrane-spanning protein YciB">
    <location>
        <begin position="1"/>
        <end position="179"/>
    </location>
</feature>
<feature type="transmembrane region" description="Helical" evidence="1">
    <location>
        <begin position="22"/>
        <end position="42"/>
    </location>
</feature>
<feature type="transmembrane region" description="Helical" evidence="1">
    <location>
        <begin position="50"/>
        <end position="70"/>
    </location>
</feature>
<feature type="transmembrane region" description="Helical" evidence="1">
    <location>
        <begin position="76"/>
        <end position="96"/>
    </location>
</feature>
<feature type="transmembrane region" description="Helical" evidence="1">
    <location>
        <begin position="121"/>
        <end position="141"/>
    </location>
</feature>
<feature type="transmembrane region" description="Helical" evidence="1">
    <location>
        <begin position="149"/>
        <end position="169"/>
    </location>
</feature>
<protein>
    <recommendedName>
        <fullName evidence="1">Inner membrane-spanning protein YciB</fullName>
    </recommendedName>
</protein>
<name>YCIB_ENT38</name>
<dbReference type="EMBL" id="CP000653">
    <property type="protein sequence ID" value="ABP60954.1"/>
    <property type="molecule type" value="Genomic_DNA"/>
</dbReference>
<dbReference type="RefSeq" id="WP_012017668.1">
    <property type="nucleotide sequence ID" value="NC_009436.1"/>
</dbReference>
<dbReference type="STRING" id="399742.Ent638_2285"/>
<dbReference type="KEGG" id="ent:Ent638_2285"/>
<dbReference type="eggNOG" id="COG2917">
    <property type="taxonomic scope" value="Bacteria"/>
</dbReference>
<dbReference type="HOGENOM" id="CLU_089554_2_0_6"/>
<dbReference type="OrthoDB" id="9788219at2"/>
<dbReference type="Proteomes" id="UP000000230">
    <property type="component" value="Chromosome"/>
</dbReference>
<dbReference type="GO" id="GO:0005886">
    <property type="term" value="C:plasma membrane"/>
    <property type="evidence" value="ECO:0007669"/>
    <property type="project" value="UniProtKB-SubCell"/>
</dbReference>
<dbReference type="HAMAP" id="MF_00189">
    <property type="entry name" value="YciB"/>
    <property type="match status" value="1"/>
</dbReference>
<dbReference type="InterPro" id="IPR006008">
    <property type="entry name" value="YciB"/>
</dbReference>
<dbReference type="NCBIfam" id="TIGR00997">
    <property type="entry name" value="ispZ"/>
    <property type="match status" value="1"/>
</dbReference>
<dbReference type="NCBIfam" id="NF001324">
    <property type="entry name" value="PRK00259.1-2"/>
    <property type="match status" value="1"/>
</dbReference>
<dbReference type="NCBIfam" id="NF001325">
    <property type="entry name" value="PRK00259.1-3"/>
    <property type="match status" value="1"/>
</dbReference>
<dbReference type="NCBIfam" id="NF001326">
    <property type="entry name" value="PRK00259.1-4"/>
    <property type="match status" value="1"/>
</dbReference>
<dbReference type="PANTHER" id="PTHR36917:SF1">
    <property type="entry name" value="INNER MEMBRANE-SPANNING PROTEIN YCIB"/>
    <property type="match status" value="1"/>
</dbReference>
<dbReference type="PANTHER" id="PTHR36917">
    <property type="entry name" value="INTRACELLULAR SEPTATION PROTEIN A-RELATED"/>
    <property type="match status" value="1"/>
</dbReference>
<dbReference type="Pfam" id="PF04279">
    <property type="entry name" value="IspA"/>
    <property type="match status" value="1"/>
</dbReference>
<evidence type="ECO:0000255" key="1">
    <source>
        <dbReference type="HAMAP-Rule" id="MF_00189"/>
    </source>
</evidence>
<keyword id="KW-0997">Cell inner membrane</keyword>
<keyword id="KW-1003">Cell membrane</keyword>
<keyword id="KW-0472">Membrane</keyword>
<keyword id="KW-0812">Transmembrane</keyword>
<keyword id="KW-1133">Transmembrane helix</keyword>
<reference key="1">
    <citation type="journal article" date="2010" name="PLoS Genet.">
        <title>Genome sequence of the plant growth promoting endophytic bacterium Enterobacter sp. 638.</title>
        <authorList>
            <person name="Taghavi S."/>
            <person name="van der Lelie D."/>
            <person name="Hoffman A."/>
            <person name="Zhang Y.B."/>
            <person name="Walla M.D."/>
            <person name="Vangronsveld J."/>
            <person name="Newman L."/>
            <person name="Monchy S."/>
        </authorList>
    </citation>
    <scope>NUCLEOTIDE SEQUENCE [LARGE SCALE GENOMIC DNA]</scope>
    <source>
        <strain>638</strain>
    </source>
</reference>
<gene>
    <name evidence="1" type="primary">yciB</name>
    <name type="ordered locus">Ent638_2285</name>
</gene>
<accession>A4WB74</accession>